<keyword id="KW-0150">Chloroplast</keyword>
<keyword id="KW-0934">Plastid</keyword>
<keyword id="KW-1185">Reference proteome</keyword>
<keyword id="KW-0346">Stress response</keyword>
<keyword id="KW-0809">Transit peptide</keyword>
<reference key="1">
    <citation type="journal article" date="2000" name="Nature">
        <title>Sequence and analysis of chromosome 1 of the plant Arabidopsis thaliana.</title>
        <authorList>
            <person name="Theologis A."/>
            <person name="Ecker J.R."/>
            <person name="Palm C.J."/>
            <person name="Federspiel N.A."/>
            <person name="Kaul S."/>
            <person name="White O."/>
            <person name="Alonso J."/>
            <person name="Altafi H."/>
            <person name="Araujo R."/>
            <person name="Bowman C.L."/>
            <person name="Brooks S.Y."/>
            <person name="Buehler E."/>
            <person name="Chan A."/>
            <person name="Chao Q."/>
            <person name="Chen H."/>
            <person name="Cheuk R.F."/>
            <person name="Chin C.W."/>
            <person name="Chung M.K."/>
            <person name="Conn L."/>
            <person name="Conway A.B."/>
            <person name="Conway A.R."/>
            <person name="Creasy T.H."/>
            <person name="Dewar K."/>
            <person name="Dunn P."/>
            <person name="Etgu P."/>
            <person name="Feldblyum T.V."/>
            <person name="Feng J.-D."/>
            <person name="Fong B."/>
            <person name="Fujii C.Y."/>
            <person name="Gill J.E."/>
            <person name="Goldsmith A.D."/>
            <person name="Haas B."/>
            <person name="Hansen N.F."/>
            <person name="Hughes B."/>
            <person name="Huizar L."/>
            <person name="Hunter J.L."/>
            <person name="Jenkins J."/>
            <person name="Johnson-Hopson C."/>
            <person name="Khan S."/>
            <person name="Khaykin E."/>
            <person name="Kim C.J."/>
            <person name="Koo H.L."/>
            <person name="Kremenetskaia I."/>
            <person name="Kurtz D.B."/>
            <person name="Kwan A."/>
            <person name="Lam B."/>
            <person name="Langin-Hooper S."/>
            <person name="Lee A."/>
            <person name="Lee J.M."/>
            <person name="Lenz C.A."/>
            <person name="Li J.H."/>
            <person name="Li Y.-P."/>
            <person name="Lin X."/>
            <person name="Liu S.X."/>
            <person name="Liu Z.A."/>
            <person name="Luros J.S."/>
            <person name="Maiti R."/>
            <person name="Marziali A."/>
            <person name="Militscher J."/>
            <person name="Miranda M."/>
            <person name="Nguyen M."/>
            <person name="Nierman W.C."/>
            <person name="Osborne B.I."/>
            <person name="Pai G."/>
            <person name="Peterson J."/>
            <person name="Pham P.K."/>
            <person name="Rizzo M."/>
            <person name="Rooney T."/>
            <person name="Rowley D."/>
            <person name="Sakano H."/>
            <person name="Salzberg S.L."/>
            <person name="Schwartz J.R."/>
            <person name="Shinn P."/>
            <person name="Southwick A.M."/>
            <person name="Sun H."/>
            <person name="Tallon L.J."/>
            <person name="Tambunga G."/>
            <person name="Toriumi M.J."/>
            <person name="Town C.D."/>
            <person name="Utterback T."/>
            <person name="Van Aken S."/>
            <person name="Vaysberg M."/>
            <person name="Vysotskaia V.S."/>
            <person name="Walker M."/>
            <person name="Wu D."/>
            <person name="Yu G."/>
            <person name="Fraser C.M."/>
            <person name="Venter J.C."/>
            <person name="Davis R.W."/>
        </authorList>
    </citation>
    <scope>NUCLEOTIDE SEQUENCE [LARGE SCALE GENOMIC DNA]</scope>
    <source>
        <strain>cv. Columbia</strain>
    </source>
</reference>
<reference key="2">
    <citation type="journal article" date="2017" name="Plant J.">
        <title>Araport11: a complete reannotation of the Arabidopsis thaliana reference genome.</title>
        <authorList>
            <person name="Cheng C.Y."/>
            <person name="Krishnakumar V."/>
            <person name="Chan A.P."/>
            <person name="Thibaud-Nissen F."/>
            <person name="Schobel S."/>
            <person name="Town C.D."/>
        </authorList>
    </citation>
    <scope>GENOME REANNOTATION</scope>
    <source>
        <strain>cv. Columbia</strain>
    </source>
</reference>
<reference key="3">
    <citation type="journal article" date="2003" name="Science">
        <title>Empirical analysis of transcriptional activity in the Arabidopsis genome.</title>
        <authorList>
            <person name="Yamada K."/>
            <person name="Lim J."/>
            <person name="Dale J.M."/>
            <person name="Chen H."/>
            <person name="Shinn P."/>
            <person name="Palm C.J."/>
            <person name="Southwick A.M."/>
            <person name="Wu H.C."/>
            <person name="Kim C.J."/>
            <person name="Nguyen M."/>
            <person name="Pham P.K."/>
            <person name="Cheuk R.F."/>
            <person name="Karlin-Newmann G."/>
            <person name="Liu S.X."/>
            <person name="Lam B."/>
            <person name="Sakano H."/>
            <person name="Wu T."/>
            <person name="Yu G."/>
            <person name="Miranda M."/>
            <person name="Quach H.L."/>
            <person name="Tripp M."/>
            <person name="Chang C.H."/>
            <person name="Lee J.M."/>
            <person name="Toriumi M.J."/>
            <person name="Chan M.M."/>
            <person name="Tang C.C."/>
            <person name="Onodera C.S."/>
            <person name="Deng J.M."/>
            <person name="Akiyama K."/>
            <person name="Ansari Y."/>
            <person name="Arakawa T."/>
            <person name="Banh J."/>
            <person name="Banno F."/>
            <person name="Bowser L."/>
            <person name="Brooks S.Y."/>
            <person name="Carninci P."/>
            <person name="Chao Q."/>
            <person name="Choy N."/>
            <person name="Enju A."/>
            <person name="Goldsmith A.D."/>
            <person name="Gurjal M."/>
            <person name="Hansen N.F."/>
            <person name="Hayashizaki Y."/>
            <person name="Johnson-Hopson C."/>
            <person name="Hsuan V.W."/>
            <person name="Iida K."/>
            <person name="Karnes M."/>
            <person name="Khan S."/>
            <person name="Koesema E."/>
            <person name="Ishida J."/>
            <person name="Jiang P.X."/>
            <person name="Jones T."/>
            <person name="Kawai J."/>
            <person name="Kamiya A."/>
            <person name="Meyers C."/>
            <person name="Nakajima M."/>
            <person name="Narusaka M."/>
            <person name="Seki M."/>
            <person name="Sakurai T."/>
            <person name="Satou M."/>
            <person name="Tamse R."/>
            <person name="Vaysberg M."/>
            <person name="Wallender E.K."/>
            <person name="Wong C."/>
            <person name="Yamamura Y."/>
            <person name="Yuan S."/>
            <person name="Shinozaki K."/>
            <person name="Davis R.W."/>
            <person name="Theologis A."/>
            <person name="Ecker J.R."/>
        </authorList>
    </citation>
    <scope>NUCLEOTIDE SEQUENCE [LARGE SCALE MRNA]</scope>
    <source>
        <strain>cv. Columbia</strain>
    </source>
</reference>
<reference key="4">
    <citation type="journal article" date="2007" name="Proc. Natl. Acad. Sci. U.S.A.">
        <title>EXECUTER1- and EXECUTER2-dependent transfer of stress-related signals from the plastid to the nucleus of Arabidopsis thaliana.</title>
        <authorList>
            <person name="Lee K.P."/>
            <person name="Kim C."/>
            <person name="Landgraf F."/>
            <person name="Apel K."/>
        </authorList>
    </citation>
    <scope>FUNCTION</scope>
    <scope>SUBCELLULAR LOCATION</scope>
</reference>
<reference key="5">
    <citation type="journal article" date="2012" name="Plant Cell">
        <title>Chloroplasts of Arabidopsis are the source and a primary target of a plant-specific programmed cell death signaling pathway.</title>
        <authorList>
            <person name="Kim C."/>
            <person name="Meskauskiene R."/>
            <person name="Zhang S."/>
            <person name="Lee K.P."/>
            <person name="Lakshmanan Ashok M."/>
            <person name="Blajecka K."/>
            <person name="Herrfurth C."/>
            <person name="Feussner I."/>
            <person name="Apel K."/>
        </authorList>
    </citation>
    <scope>FUNCTION</scope>
</reference>
<accession>Q94AT5</accession>
<accession>Q9SXD0</accession>
<comment type="function">
    <text evidence="4 5">Together with EX1, enables higher plants to perceive singlet oxygen as a stress signal in plastid that activates a genetically determined nuclear stress response program which triggers a programmed cell death (PCD). This transfer of singlet oxygen-induced stress-related signals from the plastid to the nucleus that triggers genetically controlled PCD pathway is unique to photosynthetic eukaryotes and operates under mild stress conditions, impeding photosystem II (PSII) without causing photooxidative damage of the plant.</text>
</comment>
<comment type="subcellular location">
    <subcellularLocation>
        <location evidence="4">Plastid</location>
        <location evidence="4">Chloroplast</location>
    </subcellularLocation>
</comment>
<comment type="sequence caution" evidence="7">
    <conflict type="erroneous gene model prediction">
        <sequence resource="EMBL-CDS" id="AAD45989"/>
    </conflict>
</comment>
<organism>
    <name type="scientific">Arabidopsis thaliana</name>
    <name type="common">Mouse-ear cress</name>
    <dbReference type="NCBI Taxonomy" id="3702"/>
    <lineage>
        <taxon>Eukaryota</taxon>
        <taxon>Viridiplantae</taxon>
        <taxon>Streptophyta</taxon>
        <taxon>Embryophyta</taxon>
        <taxon>Tracheophyta</taxon>
        <taxon>Spermatophyta</taxon>
        <taxon>Magnoliopsida</taxon>
        <taxon>eudicotyledons</taxon>
        <taxon>Gunneridae</taxon>
        <taxon>Pentapetalae</taxon>
        <taxon>rosids</taxon>
        <taxon>malvids</taxon>
        <taxon>Brassicales</taxon>
        <taxon>Brassicaceae</taxon>
        <taxon>Camelineae</taxon>
        <taxon>Arabidopsis</taxon>
    </lineage>
</organism>
<proteinExistence type="evidence at transcript level"/>
<name>EXEC2_ARATH</name>
<feature type="transit peptide" description="Chloroplast" evidence="1">
    <location>
        <begin position="1"/>
        <end position="69"/>
    </location>
</feature>
<feature type="chain" id="PRO_0000431895" description="Protein EXECUTER 2, chloroplastic" evidence="1">
    <location>
        <begin position="70"/>
        <end position="651"/>
    </location>
</feature>
<feature type="domain" description="UVR" evidence="2">
    <location>
        <begin position="103"/>
        <end position="138"/>
    </location>
</feature>
<feature type="region of interest" description="Disordered" evidence="3">
    <location>
        <begin position="330"/>
        <end position="359"/>
    </location>
</feature>
<evidence type="ECO:0000255" key="1"/>
<evidence type="ECO:0000255" key="2">
    <source>
        <dbReference type="PROSITE-ProRule" id="PRU00217"/>
    </source>
</evidence>
<evidence type="ECO:0000256" key="3">
    <source>
        <dbReference type="SAM" id="MobiDB-lite"/>
    </source>
</evidence>
<evidence type="ECO:0000269" key="4">
    <source>
    </source>
</evidence>
<evidence type="ECO:0000269" key="5">
    <source>
    </source>
</evidence>
<evidence type="ECO:0000303" key="6">
    <source>
    </source>
</evidence>
<evidence type="ECO:0000305" key="7"/>
<evidence type="ECO:0000312" key="8">
    <source>
        <dbReference type="Araport" id="AT1G27510"/>
    </source>
</evidence>
<evidence type="ECO:0000312" key="9">
    <source>
        <dbReference type="EMBL" id="AAD45989.1"/>
    </source>
</evidence>
<protein>
    <recommendedName>
        <fullName evidence="7">Protein EXECUTER 2, chloroplastic</fullName>
        <shortName evidence="6">AtEX2</shortName>
    </recommendedName>
</protein>
<gene>
    <name evidence="6" type="primary">EX2</name>
    <name evidence="8" type="ordered locus">At1g27510</name>
    <name evidence="9" type="ORF">T17H3.1</name>
</gene>
<dbReference type="EMBL" id="AC005916">
    <property type="protein sequence ID" value="AAD45989.1"/>
    <property type="status" value="ALT_SEQ"/>
    <property type="molecule type" value="Genomic_DNA"/>
</dbReference>
<dbReference type="EMBL" id="CP002684">
    <property type="protein sequence ID" value="AEE30840.1"/>
    <property type="molecule type" value="Genomic_DNA"/>
</dbReference>
<dbReference type="EMBL" id="AY045812">
    <property type="protein sequence ID" value="AAK76486.1"/>
    <property type="molecule type" value="mRNA"/>
</dbReference>
<dbReference type="EMBL" id="AY114085">
    <property type="protein sequence ID" value="AAM45133.1"/>
    <property type="molecule type" value="mRNA"/>
</dbReference>
<dbReference type="PIR" id="B86400">
    <property type="entry name" value="B86400"/>
</dbReference>
<dbReference type="RefSeq" id="NP_564287.1">
    <property type="nucleotide sequence ID" value="NM_102515.3"/>
</dbReference>
<dbReference type="SMR" id="Q94AT5"/>
<dbReference type="FunCoup" id="Q94AT5">
    <property type="interactions" value="2210"/>
</dbReference>
<dbReference type="STRING" id="3702.Q94AT5"/>
<dbReference type="GlyGen" id="Q94AT5">
    <property type="glycosylation" value="1 site"/>
</dbReference>
<dbReference type="PaxDb" id="3702-AT1G27510.1"/>
<dbReference type="ProteomicsDB" id="222265"/>
<dbReference type="EnsemblPlants" id="AT1G27510.1">
    <property type="protein sequence ID" value="AT1G27510.1"/>
    <property type="gene ID" value="AT1G27510"/>
</dbReference>
<dbReference type="GeneID" id="839642"/>
<dbReference type="Gramene" id="AT1G27510.1">
    <property type="protein sequence ID" value="AT1G27510.1"/>
    <property type="gene ID" value="AT1G27510"/>
</dbReference>
<dbReference type="KEGG" id="ath:AT1G27510"/>
<dbReference type="Araport" id="AT1G27510"/>
<dbReference type="TAIR" id="AT1G27510">
    <property type="gene designation" value="EX2"/>
</dbReference>
<dbReference type="eggNOG" id="ENOG502QQS3">
    <property type="taxonomic scope" value="Eukaryota"/>
</dbReference>
<dbReference type="HOGENOM" id="CLU_019201_0_0_1"/>
<dbReference type="InParanoid" id="Q94AT5"/>
<dbReference type="OMA" id="SSLEWDW"/>
<dbReference type="PhylomeDB" id="Q94AT5"/>
<dbReference type="PRO" id="PR:Q94AT5"/>
<dbReference type="Proteomes" id="UP000006548">
    <property type="component" value="Chromosome 1"/>
</dbReference>
<dbReference type="ExpressionAtlas" id="Q94AT5">
    <property type="expression patterns" value="baseline and differential"/>
</dbReference>
<dbReference type="GO" id="GO:0009507">
    <property type="term" value="C:chloroplast"/>
    <property type="evidence" value="ECO:0007669"/>
    <property type="project" value="UniProtKB-SubCell"/>
</dbReference>
<dbReference type="GO" id="GO:0042651">
    <property type="term" value="C:thylakoid membrane"/>
    <property type="evidence" value="ECO:0000314"/>
    <property type="project" value="TAIR"/>
</dbReference>
<dbReference type="GO" id="GO:0010343">
    <property type="term" value="P:singlet oxygen-mediated programmed cell death"/>
    <property type="evidence" value="ECO:0000316"/>
    <property type="project" value="TAIR"/>
</dbReference>
<dbReference type="InterPro" id="IPR044680">
    <property type="entry name" value="EX1/2"/>
</dbReference>
<dbReference type="PANTHER" id="PTHR33917">
    <property type="entry name" value="PROTEIN EXECUTER 1, CHLOROPLASTIC"/>
    <property type="match status" value="1"/>
</dbReference>
<dbReference type="PANTHER" id="PTHR33917:SF2">
    <property type="entry name" value="PROTEIN EXECUTER 2, CHLOROPLASTIC"/>
    <property type="match status" value="1"/>
</dbReference>
<dbReference type="Pfam" id="PF12014">
    <property type="entry name" value="Cyclin_D1_bind"/>
    <property type="match status" value="1"/>
</dbReference>
<sequence length="651" mass="72131">MATTQPCLIGQIIAVPQFHILFSPRNSLKPELSTNKRTNFSVSIGLRHSFASSISTCNPKAPSLSCLRNCAAVDGADTSSSEDKWDWDWDRWNRHFSEIEEVESVVSLLKSQLEDAVEKEDFEEAVKLKQAISEATVDDAVAEIMRQLQTAVNEERYHDASRLCNETGSGLVGWWVGLPRDSEEPFGRIVHITPGVGRFIGKSYSPRQLVAEAAGTPLFEIFVIKDTDGGYVMQVVYVQHVKQNLTISENSFSKVQQSSKSSINDPSILDVRGSELKVDKKEDTQLNAGEPTEEGIKNVIKFLKDKIPGLKLKVMDVIKIPEEEIVGSDDATEELVGEGTEETNSSDDEEEVEEEENDSIEAISSMDSADYGKHSNTKLVIGGVLHNIEDSSIDDEIVRVSANIMDTERDSFILHVPGRSKRDIDTRKNRVSKEQVTALAAQGLSDLLPPEVAEAFWGEKASLKVSKHVHEIVKLAINQAQKGNHLSEYTAFNRIITPESNLDPFDGLYVGAFGPYGTEIVQLKRKYGRWDDAEGSNSSDIEFFEYVEAVKLTGDPNVPAGQVTFRARIGNGSRMTNHGLFPEELGVLASYRGQGKIADFGFKKPRWVEGKLLKLNGKGMGPYVKGADLGFLYIGPEQSFLVLFNRLRLPE</sequence>